<sequence>MKGILGKKVGMTRVFKDDKAIPVTVIKAGPCVVVQKKTVETDGYNAIQIGFEEIPERKANKPLMGHFKKAQVKPLRYLREFRVENVDDYEIGQKIDVTIFSEGEKIDLIGNSKGRGYSGVMKRWNFRGGENTHGSKFHRGLGSTGMATFPSKVFKGKKMPGQYGNERVTIQNSEVVYIDVQNNLIAVKGGVPGARGGLVTIREAVKAKRPKTK</sequence>
<evidence type="ECO:0000255" key="1">
    <source>
        <dbReference type="HAMAP-Rule" id="MF_01325"/>
    </source>
</evidence>
<evidence type="ECO:0000305" key="2"/>
<gene>
    <name evidence="1" type="primary">rplC</name>
    <name type="ordered locus">Pmob_0790</name>
</gene>
<organism>
    <name type="scientific">Petrotoga mobilis (strain DSM 10674 / SJ95)</name>
    <dbReference type="NCBI Taxonomy" id="403833"/>
    <lineage>
        <taxon>Bacteria</taxon>
        <taxon>Thermotogati</taxon>
        <taxon>Thermotogota</taxon>
        <taxon>Thermotogae</taxon>
        <taxon>Petrotogales</taxon>
        <taxon>Petrotogaceae</taxon>
        <taxon>Petrotoga</taxon>
    </lineage>
</organism>
<proteinExistence type="inferred from homology"/>
<feature type="chain" id="PRO_1000086451" description="Large ribosomal subunit protein uL3">
    <location>
        <begin position="1"/>
        <end position="213"/>
    </location>
</feature>
<dbReference type="EMBL" id="CP000879">
    <property type="protein sequence ID" value="ABX31514.1"/>
    <property type="molecule type" value="Genomic_DNA"/>
</dbReference>
<dbReference type="RefSeq" id="WP_012208617.1">
    <property type="nucleotide sequence ID" value="NC_010003.1"/>
</dbReference>
<dbReference type="SMR" id="A9BHA5"/>
<dbReference type="STRING" id="403833.Pmob_0790"/>
<dbReference type="KEGG" id="pmo:Pmob_0790"/>
<dbReference type="eggNOG" id="COG0087">
    <property type="taxonomic scope" value="Bacteria"/>
</dbReference>
<dbReference type="HOGENOM" id="CLU_044142_4_1_0"/>
<dbReference type="OrthoDB" id="9806135at2"/>
<dbReference type="Proteomes" id="UP000000789">
    <property type="component" value="Chromosome"/>
</dbReference>
<dbReference type="GO" id="GO:0022625">
    <property type="term" value="C:cytosolic large ribosomal subunit"/>
    <property type="evidence" value="ECO:0007669"/>
    <property type="project" value="TreeGrafter"/>
</dbReference>
<dbReference type="GO" id="GO:0019843">
    <property type="term" value="F:rRNA binding"/>
    <property type="evidence" value="ECO:0007669"/>
    <property type="project" value="UniProtKB-UniRule"/>
</dbReference>
<dbReference type="GO" id="GO:0003735">
    <property type="term" value="F:structural constituent of ribosome"/>
    <property type="evidence" value="ECO:0007669"/>
    <property type="project" value="InterPro"/>
</dbReference>
<dbReference type="GO" id="GO:0006412">
    <property type="term" value="P:translation"/>
    <property type="evidence" value="ECO:0007669"/>
    <property type="project" value="UniProtKB-UniRule"/>
</dbReference>
<dbReference type="FunFam" id="2.40.30.10:FF:000004">
    <property type="entry name" value="50S ribosomal protein L3"/>
    <property type="match status" value="1"/>
</dbReference>
<dbReference type="FunFam" id="3.30.160.810:FF:000002">
    <property type="entry name" value="50S ribosomal protein L3"/>
    <property type="match status" value="1"/>
</dbReference>
<dbReference type="Gene3D" id="3.30.160.810">
    <property type="match status" value="1"/>
</dbReference>
<dbReference type="Gene3D" id="2.40.30.10">
    <property type="entry name" value="Translation factors"/>
    <property type="match status" value="1"/>
</dbReference>
<dbReference type="HAMAP" id="MF_01325_B">
    <property type="entry name" value="Ribosomal_uL3_B"/>
    <property type="match status" value="1"/>
</dbReference>
<dbReference type="InterPro" id="IPR000597">
    <property type="entry name" value="Ribosomal_uL3"/>
</dbReference>
<dbReference type="InterPro" id="IPR019927">
    <property type="entry name" value="Ribosomal_uL3_bac/org-type"/>
</dbReference>
<dbReference type="InterPro" id="IPR019926">
    <property type="entry name" value="Ribosomal_uL3_CS"/>
</dbReference>
<dbReference type="InterPro" id="IPR009000">
    <property type="entry name" value="Transl_B-barrel_sf"/>
</dbReference>
<dbReference type="NCBIfam" id="TIGR03625">
    <property type="entry name" value="L3_bact"/>
    <property type="match status" value="1"/>
</dbReference>
<dbReference type="PANTHER" id="PTHR11229">
    <property type="entry name" value="50S RIBOSOMAL PROTEIN L3"/>
    <property type="match status" value="1"/>
</dbReference>
<dbReference type="PANTHER" id="PTHR11229:SF16">
    <property type="entry name" value="LARGE RIBOSOMAL SUBUNIT PROTEIN UL3C"/>
    <property type="match status" value="1"/>
</dbReference>
<dbReference type="Pfam" id="PF00297">
    <property type="entry name" value="Ribosomal_L3"/>
    <property type="match status" value="1"/>
</dbReference>
<dbReference type="SUPFAM" id="SSF50447">
    <property type="entry name" value="Translation proteins"/>
    <property type="match status" value="1"/>
</dbReference>
<dbReference type="PROSITE" id="PS00474">
    <property type="entry name" value="RIBOSOMAL_L3"/>
    <property type="match status" value="1"/>
</dbReference>
<keyword id="KW-0687">Ribonucleoprotein</keyword>
<keyword id="KW-0689">Ribosomal protein</keyword>
<keyword id="KW-0694">RNA-binding</keyword>
<keyword id="KW-0699">rRNA-binding</keyword>
<comment type="function">
    <text evidence="1">One of the primary rRNA binding proteins, it binds directly near the 3'-end of the 23S rRNA, where it nucleates assembly of the 50S subunit.</text>
</comment>
<comment type="subunit">
    <text evidence="1">Part of the 50S ribosomal subunit. Forms a cluster with proteins L14 and L19.</text>
</comment>
<comment type="similarity">
    <text evidence="1">Belongs to the universal ribosomal protein uL3 family.</text>
</comment>
<reference key="1">
    <citation type="submission" date="2007-11" db="EMBL/GenBank/DDBJ databases">
        <title>Complete sequence of Petroga mobilis SJ95.</title>
        <authorList>
            <consortium name="US DOE Joint Genome Institute"/>
            <person name="Copeland A."/>
            <person name="Lucas S."/>
            <person name="Lapidus A."/>
            <person name="Barry K."/>
            <person name="Glavina del Rio T."/>
            <person name="Dalin E."/>
            <person name="Tice H."/>
            <person name="Pitluck S."/>
            <person name="Meincke L."/>
            <person name="Brettin T."/>
            <person name="Bruce D."/>
            <person name="Detter J.C."/>
            <person name="Han C."/>
            <person name="Kuske C.R."/>
            <person name="Schmutz J."/>
            <person name="Larimer F."/>
            <person name="Land M."/>
            <person name="Hauser L."/>
            <person name="Kyrpides N."/>
            <person name="Mikhailova N."/>
            <person name="Noll K."/>
            <person name="Richardson P."/>
        </authorList>
    </citation>
    <scope>NUCLEOTIDE SEQUENCE [LARGE SCALE GENOMIC DNA]</scope>
    <source>
        <strain>DSM 10674 / SJ95</strain>
    </source>
</reference>
<name>RL3_PETMO</name>
<protein>
    <recommendedName>
        <fullName evidence="1">Large ribosomal subunit protein uL3</fullName>
    </recommendedName>
    <alternativeName>
        <fullName evidence="2">50S ribosomal protein L3</fullName>
    </alternativeName>
</protein>
<accession>A9BHA5</accession>